<protein>
    <recommendedName>
        <fullName evidence="1">Serine/threonine protein phosphatase PstP</fullName>
        <ecNumber evidence="1">3.1.3.16</ecNumber>
    </recommendedName>
    <alternativeName>
        <fullName evidence="1">Mycobacterial Ser/Thr phosphatase</fullName>
        <shortName evidence="1">Mstp</shortName>
    </alternativeName>
    <alternativeName>
        <fullName evidence="1">PP2C-family Ser/Thr phosphatase</fullName>
    </alternativeName>
</protein>
<sequence>MARVTLVLRYAARSDRGLVRANNEDSVYAGARLLALADGMGGHAAGEVASQLVIAALAHLDDDEPGGDLLAKLDAAVRAGNSAIAAQVEMEPDLEGMGTTLTAILFAGNRLGLVHIGDSRGYLLRDGELTQITKDDTFVQTLVDEGRITPEEAHSHPQRSLIMRALTGHEVEPTLTMREARAGDRYLLCSDGLSDPVSDETILEALQIPEVAESAHRLIELALRGGGPDNVTVVVADVVDYDYGQTQPILAGAVSGDDDQLTLPNTAAGRASAISQRKEIVKRVPPQADTFSRPRWSGRRLAFVVALVTVLMTAGLLIGRAIIRSNYYVADYAGSVSIMRGIQGSLLGMSLHQPYLMGCLSPRNELSQISYGQSGGPLDCHLMKLEDLRPPERAQVRAGLPAGTLDDAIGQLRELAANSLLPPCPAPRATSPPGRPAPPTTSETTEPNVTSSPASPSPTTSASAPTGTTPAIPTSASPAAPASPPTPWPVTSSPTMAALPPPPPQPGIDCRAAA</sequence>
<proteinExistence type="inferred from homology"/>
<feature type="chain" id="PRO_0000428111" description="Serine/threonine protein phosphatase PstP">
    <location>
        <begin position="1"/>
        <end position="514"/>
    </location>
</feature>
<feature type="topological domain" description="Cytoplasmic" evidence="5">
    <location>
        <begin position="1"/>
        <end position="302"/>
    </location>
</feature>
<feature type="transmembrane region" description="Helical" evidence="2">
    <location>
        <begin position="303"/>
        <end position="323"/>
    </location>
</feature>
<feature type="topological domain" description="Extracellular" evidence="5">
    <location>
        <begin position="324"/>
        <end position="514"/>
    </location>
</feature>
<feature type="domain" description="PPM-type phosphatase" evidence="3">
    <location>
        <begin position="9"/>
        <end position="238"/>
    </location>
</feature>
<feature type="region of interest" description="Disordered" evidence="4">
    <location>
        <begin position="420"/>
        <end position="514"/>
    </location>
</feature>
<feature type="compositionally biased region" description="Low complexity" evidence="4">
    <location>
        <begin position="440"/>
        <end position="480"/>
    </location>
</feature>
<feature type="binding site" evidence="1">
    <location>
        <position position="38"/>
    </location>
    <ligand>
        <name>Mn(2+)</name>
        <dbReference type="ChEBI" id="CHEBI:29035"/>
        <label>1</label>
    </ligand>
</feature>
<feature type="binding site" evidence="1">
    <location>
        <position position="38"/>
    </location>
    <ligand>
        <name>Mn(2+)</name>
        <dbReference type="ChEBI" id="CHEBI:29035"/>
        <label>2</label>
    </ligand>
</feature>
<feature type="binding site" evidence="1">
    <location>
        <position position="39"/>
    </location>
    <ligand>
        <name>Mn(2+)</name>
        <dbReference type="ChEBI" id="CHEBI:29035"/>
        <label>1</label>
    </ligand>
</feature>
<feature type="binding site" evidence="1">
    <location>
        <position position="118"/>
    </location>
    <ligand>
        <name>Mn(2+)</name>
        <dbReference type="ChEBI" id="CHEBI:29035"/>
        <label>3</label>
    </ligand>
</feature>
<feature type="binding site" evidence="1">
    <location>
        <position position="160"/>
    </location>
    <ligand>
        <name>Mn(2+)</name>
        <dbReference type="ChEBI" id="CHEBI:29035"/>
        <label>3</label>
    </ligand>
</feature>
<feature type="binding site" evidence="1">
    <location>
        <position position="191"/>
    </location>
    <ligand>
        <name>Mn(2+)</name>
        <dbReference type="ChEBI" id="CHEBI:29035"/>
        <label>2</label>
    </ligand>
</feature>
<feature type="binding site" evidence="1">
    <location>
        <position position="191"/>
    </location>
    <ligand>
        <name>Mn(2+)</name>
        <dbReference type="ChEBI" id="CHEBI:29035"/>
        <label>3</label>
    </ligand>
</feature>
<feature type="binding site" evidence="1">
    <location>
        <position position="229"/>
    </location>
    <ligand>
        <name>Mn(2+)</name>
        <dbReference type="ChEBI" id="CHEBI:29035"/>
        <label>2</label>
    </ligand>
</feature>
<gene>
    <name type="primary">pstP</name>
    <name type="synonym">mstp</name>
    <name type="synonym">ppp</name>
    <name type="ordered locus">MT0021</name>
</gene>
<dbReference type="EC" id="3.1.3.16" evidence="1"/>
<dbReference type="EMBL" id="AE000516">
    <property type="protein sequence ID" value="AAK44243.1"/>
    <property type="status" value="ALT_INIT"/>
    <property type="molecule type" value="Genomic_DNA"/>
</dbReference>
<dbReference type="PIR" id="H70699">
    <property type="entry name" value="H70699"/>
</dbReference>
<dbReference type="SMR" id="P9WHW4"/>
<dbReference type="KEGG" id="mtc:MT0021"/>
<dbReference type="PATRIC" id="fig|83331.31.peg.22"/>
<dbReference type="HOGENOM" id="CLU_025431_0_0_11"/>
<dbReference type="Proteomes" id="UP000001020">
    <property type="component" value="Chromosome"/>
</dbReference>
<dbReference type="GO" id="GO:0005886">
    <property type="term" value="C:plasma membrane"/>
    <property type="evidence" value="ECO:0007669"/>
    <property type="project" value="UniProtKB-SubCell"/>
</dbReference>
<dbReference type="GO" id="GO:0046872">
    <property type="term" value="F:metal ion binding"/>
    <property type="evidence" value="ECO:0007669"/>
    <property type="project" value="UniProtKB-KW"/>
</dbReference>
<dbReference type="GO" id="GO:0004722">
    <property type="term" value="F:protein serine/threonine phosphatase activity"/>
    <property type="evidence" value="ECO:0007669"/>
    <property type="project" value="UniProtKB-EC"/>
</dbReference>
<dbReference type="CDD" id="cd00143">
    <property type="entry name" value="PP2Cc"/>
    <property type="match status" value="1"/>
</dbReference>
<dbReference type="FunFam" id="3.60.40.10:FF:000002">
    <property type="entry name" value="Serine/threonine phosphatase stp"/>
    <property type="match status" value="1"/>
</dbReference>
<dbReference type="Gene3D" id="3.60.40.10">
    <property type="entry name" value="PPM-type phosphatase domain"/>
    <property type="match status" value="1"/>
</dbReference>
<dbReference type="InterPro" id="IPR036457">
    <property type="entry name" value="PPM-type-like_dom_sf"/>
</dbReference>
<dbReference type="InterPro" id="IPR001932">
    <property type="entry name" value="PPM-type_phosphatase-like_dom"/>
</dbReference>
<dbReference type="Pfam" id="PF13672">
    <property type="entry name" value="PP2C_2"/>
    <property type="match status" value="1"/>
</dbReference>
<dbReference type="SMART" id="SM00331">
    <property type="entry name" value="PP2C_SIG"/>
    <property type="match status" value="1"/>
</dbReference>
<dbReference type="SMART" id="SM00332">
    <property type="entry name" value="PP2Cc"/>
    <property type="match status" value="1"/>
</dbReference>
<dbReference type="SUPFAM" id="SSF81606">
    <property type="entry name" value="PP2C-like"/>
    <property type="match status" value="1"/>
</dbReference>
<dbReference type="PROSITE" id="PS51746">
    <property type="entry name" value="PPM_2"/>
    <property type="match status" value="1"/>
</dbReference>
<reference key="1">
    <citation type="journal article" date="2002" name="J. Bacteriol.">
        <title>Whole-genome comparison of Mycobacterium tuberculosis clinical and laboratory strains.</title>
        <authorList>
            <person name="Fleischmann R.D."/>
            <person name="Alland D."/>
            <person name="Eisen J.A."/>
            <person name="Carpenter L."/>
            <person name="White O."/>
            <person name="Peterson J.D."/>
            <person name="DeBoy R.T."/>
            <person name="Dodson R.J."/>
            <person name="Gwinn M.L."/>
            <person name="Haft D.H."/>
            <person name="Hickey E.K."/>
            <person name="Kolonay J.F."/>
            <person name="Nelson W.C."/>
            <person name="Umayam L.A."/>
            <person name="Ermolaeva M.D."/>
            <person name="Salzberg S.L."/>
            <person name="Delcher A."/>
            <person name="Utterback T.R."/>
            <person name="Weidman J.F."/>
            <person name="Khouri H.M."/>
            <person name="Gill J."/>
            <person name="Mikula A."/>
            <person name="Bishai W."/>
            <person name="Jacobs W.R. Jr."/>
            <person name="Venter J.C."/>
            <person name="Fraser C.M."/>
        </authorList>
    </citation>
    <scope>NUCLEOTIDE SEQUENCE [LARGE SCALE GENOMIC DNA]</scope>
    <source>
        <strain>CDC 1551 / Oshkosh</strain>
    </source>
</reference>
<comment type="function">
    <text evidence="1">Plays an important role in regulating cell division and growth by reversible phosphorylation signaling. May play important roles in regulating cellular metabolism and signaling pathways, which could mediate the growth and development of the cell. Plays a role in establishing and maintaining infection.</text>
</comment>
<comment type="catalytic activity">
    <reaction evidence="1">
        <text>O-phospho-L-seryl-[protein] + H2O = L-seryl-[protein] + phosphate</text>
        <dbReference type="Rhea" id="RHEA:20629"/>
        <dbReference type="Rhea" id="RHEA-COMP:9863"/>
        <dbReference type="Rhea" id="RHEA-COMP:11604"/>
        <dbReference type="ChEBI" id="CHEBI:15377"/>
        <dbReference type="ChEBI" id="CHEBI:29999"/>
        <dbReference type="ChEBI" id="CHEBI:43474"/>
        <dbReference type="ChEBI" id="CHEBI:83421"/>
        <dbReference type="EC" id="3.1.3.16"/>
    </reaction>
</comment>
<comment type="catalytic activity">
    <reaction evidence="1">
        <text>O-phospho-L-threonyl-[protein] + H2O = L-threonyl-[protein] + phosphate</text>
        <dbReference type="Rhea" id="RHEA:47004"/>
        <dbReference type="Rhea" id="RHEA-COMP:11060"/>
        <dbReference type="Rhea" id="RHEA-COMP:11605"/>
        <dbReference type="ChEBI" id="CHEBI:15377"/>
        <dbReference type="ChEBI" id="CHEBI:30013"/>
        <dbReference type="ChEBI" id="CHEBI:43474"/>
        <dbReference type="ChEBI" id="CHEBI:61977"/>
        <dbReference type="EC" id="3.1.3.16"/>
    </reaction>
</comment>
<comment type="cofactor">
    <cofactor evidence="1">
        <name>Mn(2+)</name>
        <dbReference type="ChEBI" id="CHEBI:29035"/>
    </cofactor>
    <text evidence="1">Binds 3 Mn(2+) ions per subunit (By similarity). The third manganese ion is unlikely to be involved in catalysis but contributes instead to stabilize a flap segment, which is partially disordered in the absence of bound metal (By similarity).</text>
</comment>
<comment type="subcellular location">
    <subcellularLocation>
        <location evidence="1">Cell membrane</location>
        <topology evidence="2">Single-pass membrane protein</topology>
    </subcellularLocation>
</comment>
<comment type="sequence caution" evidence="5">
    <conflict type="erroneous initiation">
        <sequence resource="EMBL-CDS" id="AAK44243"/>
    </conflict>
</comment>
<organism>
    <name type="scientific">Mycobacterium tuberculosis (strain CDC 1551 / Oshkosh)</name>
    <dbReference type="NCBI Taxonomy" id="83331"/>
    <lineage>
        <taxon>Bacteria</taxon>
        <taxon>Bacillati</taxon>
        <taxon>Actinomycetota</taxon>
        <taxon>Actinomycetes</taxon>
        <taxon>Mycobacteriales</taxon>
        <taxon>Mycobacteriaceae</taxon>
        <taxon>Mycobacterium</taxon>
        <taxon>Mycobacterium tuberculosis complex</taxon>
    </lineage>
</organism>
<name>PSTP_MYCTO</name>
<evidence type="ECO:0000250" key="1">
    <source>
        <dbReference type="UniProtKB" id="P9WHW5"/>
    </source>
</evidence>
<evidence type="ECO:0000255" key="2"/>
<evidence type="ECO:0000255" key="3">
    <source>
        <dbReference type="PROSITE-ProRule" id="PRU01082"/>
    </source>
</evidence>
<evidence type="ECO:0000256" key="4">
    <source>
        <dbReference type="SAM" id="MobiDB-lite"/>
    </source>
</evidence>
<evidence type="ECO:0000305" key="5"/>
<accession>P9WHW4</accession>
<accession>L0T2B3</accession>
<accession>P71588</accession>
<accession>Q8VKT2</accession>
<keyword id="KW-1003">Cell membrane</keyword>
<keyword id="KW-0378">Hydrolase</keyword>
<keyword id="KW-0464">Manganese</keyword>
<keyword id="KW-0472">Membrane</keyword>
<keyword id="KW-0479">Metal-binding</keyword>
<keyword id="KW-0904">Protein phosphatase</keyword>
<keyword id="KW-1185">Reference proteome</keyword>
<keyword id="KW-0812">Transmembrane</keyword>
<keyword id="KW-1133">Transmembrane helix</keyword>